<name>RECO_BACC0</name>
<reference key="1">
    <citation type="submission" date="2008-10" db="EMBL/GenBank/DDBJ databases">
        <title>Genome sequence of Bacillus cereus AH820.</title>
        <authorList>
            <person name="Dodson R.J."/>
            <person name="Durkin A.S."/>
            <person name="Rosovitz M.J."/>
            <person name="Rasko D.A."/>
            <person name="Hoffmaster A."/>
            <person name="Ravel J."/>
            <person name="Sutton G."/>
        </authorList>
    </citation>
    <scope>NUCLEOTIDE SEQUENCE [LARGE SCALE GENOMIC DNA]</scope>
    <source>
        <strain>AH820</strain>
    </source>
</reference>
<evidence type="ECO:0000255" key="1">
    <source>
        <dbReference type="HAMAP-Rule" id="MF_00201"/>
    </source>
</evidence>
<organism>
    <name type="scientific">Bacillus cereus (strain AH820)</name>
    <dbReference type="NCBI Taxonomy" id="405535"/>
    <lineage>
        <taxon>Bacteria</taxon>
        <taxon>Bacillati</taxon>
        <taxon>Bacillota</taxon>
        <taxon>Bacilli</taxon>
        <taxon>Bacillales</taxon>
        <taxon>Bacillaceae</taxon>
        <taxon>Bacillus</taxon>
        <taxon>Bacillus cereus group</taxon>
    </lineage>
</organism>
<gene>
    <name evidence="1" type="primary">recO</name>
    <name type="ordered locus">BCAH820_4320</name>
</gene>
<proteinExistence type="inferred from homology"/>
<comment type="function">
    <text evidence="1">Involved in DNA repair and RecF pathway recombination.</text>
</comment>
<comment type="similarity">
    <text evidence="1">Belongs to the RecO family.</text>
</comment>
<dbReference type="EMBL" id="CP001283">
    <property type="protein sequence ID" value="ACK92238.1"/>
    <property type="molecule type" value="Genomic_DNA"/>
</dbReference>
<dbReference type="RefSeq" id="WP_000487010.1">
    <property type="nucleotide sequence ID" value="NC_011773.1"/>
</dbReference>
<dbReference type="SMR" id="B7JN23"/>
<dbReference type="GeneID" id="93006802"/>
<dbReference type="KEGG" id="bcu:BCAH820_4320"/>
<dbReference type="HOGENOM" id="CLU_066632_4_0_9"/>
<dbReference type="Proteomes" id="UP000001363">
    <property type="component" value="Chromosome"/>
</dbReference>
<dbReference type="GO" id="GO:0043590">
    <property type="term" value="C:bacterial nucleoid"/>
    <property type="evidence" value="ECO:0007669"/>
    <property type="project" value="TreeGrafter"/>
</dbReference>
<dbReference type="GO" id="GO:0006310">
    <property type="term" value="P:DNA recombination"/>
    <property type="evidence" value="ECO:0007669"/>
    <property type="project" value="UniProtKB-UniRule"/>
</dbReference>
<dbReference type="GO" id="GO:0006302">
    <property type="term" value="P:double-strand break repair"/>
    <property type="evidence" value="ECO:0007669"/>
    <property type="project" value="TreeGrafter"/>
</dbReference>
<dbReference type="Gene3D" id="2.40.50.140">
    <property type="entry name" value="Nucleic acid-binding proteins"/>
    <property type="match status" value="1"/>
</dbReference>
<dbReference type="Gene3D" id="1.20.1440.120">
    <property type="entry name" value="Recombination protein O, C-terminal domain"/>
    <property type="match status" value="1"/>
</dbReference>
<dbReference type="HAMAP" id="MF_00201">
    <property type="entry name" value="RecO"/>
    <property type="match status" value="1"/>
</dbReference>
<dbReference type="InterPro" id="IPR037278">
    <property type="entry name" value="ARFGAP/RecO"/>
</dbReference>
<dbReference type="InterPro" id="IPR022572">
    <property type="entry name" value="DNA_rep/recomb_RecO_N"/>
</dbReference>
<dbReference type="InterPro" id="IPR012340">
    <property type="entry name" value="NA-bd_OB-fold"/>
</dbReference>
<dbReference type="InterPro" id="IPR003717">
    <property type="entry name" value="RecO"/>
</dbReference>
<dbReference type="InterPro" id="IPR042242">
    <property type="entry name" value="RecO_C"/>
</dbReference>
<dbReference type="NCBIfam" id="TIGR00613">
    <property type="entry name" value="reco"/>
    <property type="match status" value="1"/>
</dbReference>
<dbReference type="PANTHER" id="PTHR33991">
    <property type="entry name" value="DNA REPAIR PROTEIN RECO"/>
    <property type="match status" value="1"/>
</dbReference>
<dbReference type="PANTHER" id="PTHR33991:SF1">
    <property type="entry name" value="DNA REPAIR PROTEIN RECO"/>
    <property type="match status" value="1"/>
</dbReference>
<dbReference type="Pfam" id="PF02565">
    <property type="entry name" value="RecO_C"/>
    <property type="match status" value="1"/>
</dbReference>
<dbReference type="Pfam" id="PF11967">
    <property type="entry name" value="RecO_N"/>
    <property type="match status" value="1"/>
</dbReference>
<dbReference type="SUPFAM" id="SSF57863">
    <property type="entry name" value="ArfGap/RecO-like zinc finger"/>
    <property type="match status" value="1"/>
</dbReference>
<dbReference type="SUPFAM" id="SSF50249">
    <property type="entry name" value="Nucleic acid-binding proteins"/>
    <property type="match status" value="1"/>
</dbReference>
<sequence length="248" mass="28665">MFQKVEGIVIRTTDYGETNKIVTIFSRELGKVSAMARGAKKPKSRLASVSQLMTHGHFLIQMGSGLGTLQQGEIISTMKEIREDIFLTAYASFIVELTDKATEDKKHNPYLFEMLYQTLHYMCEGVDPEVLSLIYQTKMLPVLGMRPYFDTCAICHQETDFVAFSVREGGFLCSRHAEQDQYRIPVGEAVHKLLRLFYHFDLHRLGNVSVKDSTKKQMRLVLNTYYDEYCGIYLKSRRFLEQLDKFQI</sequence>
<feature type="chain" id="PRO_1000118707" description="DNA repair protein RecO">
    <location>
        <begin position="1"/>
        <end position="248"/>
    </location>
</feature>
<accession>B7JN23</accession>
<protein>
    <recommendedName>
        <fullName evidence="1">DNA repair protein RecO</fullName>
    </recommendedName>
    <alternativeName>
        <fullName evidence="1">Recombination protein O</fullName>
    </alternativeName>
</protein>
<keyword id="KW-0227">DNA damage</keyword>
<keyword id="KW-0233">DNA recombination</keyword>
<keyword id="KW-0234">DNA repair</keyword>